<organism>
    <name type="scientific">Aspergillus clavatus (strain ATCC 1007 / CBS 513.65 / DSM 816 / NCTC 3887 / NRRL 1 / QM 1276 / 107)</name>
    <dbReference type="NCBI Taxonomy" id="344612"/>
    <lineage>
        <taxon>Eukaryota</taxon>
        <taxon>Fungi</taxon>
        <taxon>Dikarya</taxon>
        <taxon>Ascomycota</taxon>
        <taxon>Pezizomycotina</taxon>
        <taxon>Eurotiomycetes</taxon>
        <taxon>Eurotiomycetidae</taxon>
        <taxon>Eurotiales</taxon>
        <taxon>Aspergillaceae</taxon>
        <taxon>Aspergillus</taxon>
        <taxon>Aspergillus subgen. Fumigati</taxon>
    </lineage>
</organism>
<protein>
    <recommendedName>
        <fullName evidence="1">Probable cytosolic iron-sulfur protein assembly protein 1</fullName>
    </recommendedName>
</protein>
<sequence length="453" mass="49308">MAAEPTARLSLLSDLTPPSLERTWLTAPHPTLPIVATCSSDKTVRVYSLTNFRLLSTISGGHKRSVRTCAWKPHVKGESVLATGSFDATVGIWRRWDSYGQTERGAADWGVGDSAGSGTQAKGLADGYGAGGDEENENEDEDEEWRFAVLLDGHDSEVKSVSWSPSGMLLATCSRDKSIWIWEDLDDGDNNFETVAVMQEHQGDVKCVAWHPAEDCLASASYDDTIRLWREDLDDWGQVACIKGHQGTVWCVDWEGVDSVPCGAAADLAEQWRATHALSGPRLVSCSDDRTVRIWRRQPKEPRAQQNTSPFGSSGIPSIIRPTGTDETWEEECTLPQAHDLSVYTVAWSKRTGLLASVGADGRIVVYAERFVGGDSATQAMETEPSADAAEGAPAPSTEWTVIATMDGAHDIYEINHVAWAKRADRGKAEGEDEEVLVTTADDGGVKVWTIAR</sequence>
<dbReference type="EMBL" id="DS027059">
    <property type="protein sequence ID" value="EAW07937.1"/>
    <property type="molecule type" value="Genomic_DNA"/>
</dbReference>
<dbReference type="RefSeq" id="XP_001269363.1">
    <property type="nucleotide sequence ID" value="XM_001269362.1"/>
</dbReference>
<dbReference type="SMR" id="A1CQL6"/>
<dbReference type="STRING" id="344612.A1CQL6"/>
<dbReference type="EnsemblFungi" id="EAW07937">
    <property type="protein sequence ID" value="EAW07937"/>
    <property type="gene ID" value="ACLA_026540"/>
</dbReference>
<dbReference type="GeneID" id="4700989"/>
<dbReference type="KEGG" id="act:ACLA_026540"/>
<dbReference type="VEuPathDB" id="FungiDB:ACLA_026540"/>
<dbReference type="eggNOG" id="KOG0645">
    <property type="taxonomic scope" value="Eukaryota"/>
</dbReference>
<dbReference type="HOGENOM" id="CLU_000288_57_8_1"/>
<dbReference type="OMA" id="IREIRWS"/>
<dbReference type="OrthoDB" id="284782at2759"/>
<dbReference type="Proteomes" id="UP000006701">
    <property type="component" value="Unassembled WGS sequence"/>
</dbReference>
<dbReference type="GO" id="GO:0097361">
    <property type="term" value="C:cytosolic [4Fe-4S] assembly targeting complex"/>
    <property type="evidence" value="ECO:0007669"/>
    <property type="project" value="InterPro"/>
</dbReference>
<dbReference type="GO" id="GO:0016226">
    <property type="term" value="P:iron-sulfur cluster assembly"/>
    <property type="evidence" value="ECO:0007669"/>
    <property type="project" value="UniProtKB-UniRule"/>
</dbReference>
<dbReference type="Gene3D" id="2.130.10.10">
    <property type="entry name" value="YVTN repeat-like/Quinoprotein amine dehydrogenase"/>
    <property type="match status" value="1"/>
</dbReference>
<dbReference type="HAMAP" id="MF_03037">
    <property type="entry name" value="ciao1"/>
    <property type="match status" value="1"/>
</dbReference>
<dbReference type="InterPro" id="IPR028608">
    <property type="entry name" value="CIAO1/Cia1"/>
</dbReference>
<dbReference type="InterPro" id="IPR020472">
    <property type="entry name" value="G-protein_beta_WD-40_rep"/>
</dbReference>
<dbReference type="InterPro" id="IPR015943">
    <property type="entry name" value="WD40/YVTN_repeat-like_dom_sf"/>
</dbReference>
<dbReference type="InterPro" id="IPR036322">
    <property type="entry name" value="WD40_repeat_dom_sf"/>
</dbReference>
<dbReference type="InterPro" id="IPR001680">
    <property type="entry name" value="WD40_rpt"/>
</dbReference>
<dbReference type="PANTHER" id="PTHR19920:SF0">
    <property type="entry name" value="CYTOSOLIC IRON-SULFUR PROTEIN ASSEMBLY PROTEIN CIAO1-RELATED"/>
    <property type="match status" value="1"/>
</dbReference>
<dbReference type="PANTHER" id="PTHR19920">
    <property type="entry name" value="WD40 PROTEIN CIAO1"/>
    <property type="match status" value="1"/>
</dbReference>
<dbReference type="Pfam" id="PF00400">
    <property type="entry name" value="WD40"/>
    <property type="match status" value="6"/>
</dbReference>
<dbReference type="PRINTS" id="PR00320">
    <property type="entry name" value="GPROTEINBRPT"/>
</dbReference>
<dbReference type="SMART" id="SM00320">
    <property type="entry name" value="WD40"/>
    <property type="match status" value="7"/>
</dbReference>
<dbReference type="SUPFAM" id="SSF50978">
    <property type="entry name" value="WD40 repeat-like"/>
    <property type="match status" value="1"/>
</dbReference>
<dbReference type="PROSITE" id="PS50082">
    <property type="entry name" value="WD_REPEATS_2"/>
    <property type="match status" value="4"/>
</dbReference>
<dbReference type="PROSITE" id="PS50294">
    <property type="entry name" value="WD_REPEATS_REGION"/>
    <property type="match status" value="2"/>
</dbReference>
<proteinExistence type="inferred from homology"/>
<keyword id="KW-1185">Reference proteome</keyword>
<keyword id="KW-0677">Repeat</keyword>
<keyword id="KW-0853">WD repeat</keyword>
<accession>A1CQL6</accession>
<name>CIAO1_ASPCL</name>
<evidence type="ECO:0000255" key="1">
    <source>
        <dbReference type="HAMAP-Rule" id="MF_03037"/>
    </source>
</evidence>
<evidence type="ECO:0000256" key="2">
    <source>
        <dbReference type="SAM" id="MobiDB-lite"/>
    </source>
</evidence>
<gene>
    <name type="primary">cia1</name>
    <name type="ORF">ACLA_026540</name>
</gene>
<reference key="1">
    <citation type="journal article" date="2008" name="PLoS Genet.">
        <title>Genomic islands in the pathogenic filamentous fungus Aspergillus fumigatus.</title>
        <authorList>
            <person name="Fedorova N.D."/>
            <person name="Khaldi N."/>
            <person name="Joardar V.S."/>
            <person name="Maiti R."/>
            <person name="Amedeo P."/>
            <person name="Anderson M.J."/>
            <person name="Crabtree J."/>
            <person name="Silva J.C."/>
            <person name="Badger J.H."/>
            <person name="Albarraq A."/>
            <person name="Angiuoli S."/>
            <person name="Bussey H."/>
            <person name="Bowyer P."/>
            <person name="Cotty P.J."/>
            <person name="Dyer P.S."/>
            <person name="Egan A."/>
            <person name="Galens K."/>
            <person name="Fraser-Liggett C.M."/>
            <person name="Haas B.J."/>
            <person name="Inman J.M."/>
            <person name="Kent R."/>
            <person name="Lemieux S."/>
            <person name="Malavazi I."/>
            <person name="Orvis J."/>
            <person name="Roemer T."/>
            <person name="Ronning C.M."/>
            <person name="Sundaram J.P."/>
            <person name="Sutton G."/>
            <person name="Turner G."/>
            <person name="Venter J.C."/>
            <person name="White O.R."/>
            <person name="Whitty B.R."/>
            <person name="Youngman P."/>
            <person name="Wolfe K.H."/>
            <person name="Goldman G.H."/>
            <person name="Wortman J.R."/>
            <person name="Jiang B."/>
            <person name="Denning D.W."/>
            <person name="Nierman W.C."/>
        </authorList>
    </citation>
    <scope>NUCLEOTIDE SEQUENCE [LARGE SCALE GENOMIC DNA]</scope>
    <source>
        <strain>ATCC 1007 / CBS 513.65 / DSM 816 / NCTC 3887 / NRRL 1 / QM 1276 / 107</strain>
    </source>
</reference>
<comment type="function">
    <text evidence="1">Essential component of the cytosolic iron-sulfur (Fe/S) protein assembly machinery. Required for the maturation of extramitochondrial Fe/S proteins.</text>
</comment>
<comment type="similarity">
    <text evidence="1">Belongs to the WD repeat CIA1 family.</text>
</comment>
<feature type="chain" id="PRO_0000382500" description="Probable cytosolic iron-sulfur protein assembly protein 1">
    <location>
        <begin position="1"/>
        <end position="453"/>
    </location>
</feature>
<feature type="repeat" description="WD 1">
    <location>
        <begin position="15"/>
        <end position="57"/>
    </location>
</feature>
<feature type="repeat" description="WD 2">
    <location>
        <begin position="61"/>
        <end position="103"/>
    </location>
</feature>
<feature type="repeat" description="WD 3">
    <location>
        <begin position="153"/>
        <end position="192"/>
    </location>
</feature>
<feature type="repeat" description="WD 4">
    <location>
        <begin position="200"/>
        <end position="239"/>
    </location>
</feature>
<feature type="repeat" description="WD 5">
    <location>
        <begin position="244"/>
        <end position="305"/>
    </location>
</feature>
<feature type="repeat" description="WD 6">
    <location>
        <begin position="338"/>
        <end position="377"/>
    </location>
</feature>
<feature type="repeat" description="WD 7">
    <location>
        <begin position="409"/>
        <end position="450"/>
    </location>
</feature>
<feature type="region of interest" description="Disordered" evidence="2">
    <location>
        <begin position="107"/>
        <end position="142"/>
    </location>
</feature>
<feature type="region of interest" description="Disordered" evidence="2">
    <location>
        <begin position="300"/>
        <end position="319"/>
    </location>
</feature>
<feature type="compositionally biased region" description="Acidic residues" evidence="2">
    <location>
        <begin position="132"/>
        <end position="142"/>
    </location>
</feature>
<feature type="compositionally biased region" description="Low complexity" evidence="2">
    <location>
        <begin position="309"/>
        <end position="319"/>
    </location>
</feature>